<accession>Q20967</accession>
<protein>
    <recommendedName>
        <fullName evidence="5">Lysozyme-like protein 5</fullName>
    </recommendedName>
</protein>
<comment type="function">
    <text evidence="3 4">Plays a role in resistance to Gram-positive bacteria S.aureus or B.thuringiensis infection.</text>
</comment>
<comment type="induction">
    <text evidence="3 4">Induced by Gram-positive bacterium S.aureus infection (PubMed:24882217). Down-regulated by exposure to Gram-positive bacterium B.thuringiensis spore toxins (PubMed:21931778).</text>
</comment>
<comment type="disruption phenotype">
    <text evidence="3 4">Reduced survival in response to bacterium B.thuringiensis infection (PubMed:21931778). Simultaneous RNAi-mediated knockdown of ilys-2 results in a reduction in survival following bacterium S.aureus infection.</text>
</comment>
<comment type="similarity">
    <text evidence="2 5">Belongs to the glycosyl hydrolase 25 family.</text>
</comment>
<comment type="caution">
    <text evidence="5">Lacks conserved active site residues, suggesting it has no catalytic activity.</text>
</comment>
<sequence>MKHFFITILLFCSVVSAARNGIDINSPVSTSTFTCIKNAGFSFIIPRIYHSSGSVDTVGVQNVKNARAAGLTDVDGYIFPCLKSTCASAANQVKASLDAVKAAGTKISTLWLDIERLNWPADHASNRAFIEAMVSEAKAYGQQVGIYSNYYNWQDIVGLDYHGQSSLMLWWPAYDGVKDFSKYAPFGGWSKPTIHQWSDTTTGPCGVSVDMNYIP</sequence>
<name>LYS5_CAEEL</name>
<keyword id="KW-0929">Antimicrobial</keyword>
<keyword id="KW-0081">Bacteriolytic enzyme</keyword>
<keyword id="KW-0326">Glycosidase</keyword>
<keyword id="KW-0378">Hydrolase</keyword>
<keyword id="KW-0391">Immunity</keyword>
<keyword id="KW-0399">Innate immunity</keyword>
<keyword id="KW-1185">Reference proteome</keyword>
<keyword id="KW-0732">Signal</keyword>
<dbReference type="EMBL" id="BX284604">
    <property type="protein sequence ID" value="CAA97800.1"/>
    <property type="molecule type" value="Genomic_DNA"/>
</dbReference>
<dbReference type="PIR" id="T22895">
    <property type="entry name" value="T22895"/>
</dbReference>
<dbReference type="RefSeq" id="NP_502193.1">
    <property type="nucleotide sequence ID" value="NM_069792.6"/>
</dbReference>
<dbReference type="SMR" id="Q20967"/>
<dbReference type="FunCoup" id="Q20967">
    <property type="interactions" value="3"/>
</dbReference>
<dbReference type="STRING" id="6239.F58B3.2.1"/>
<dbReference type="PaxDb" id="6239-F58B3.2"/>
<dbReference type="PeptideAtlas" id="Q20967"/>
<dbReference type="EnsemblMetazoa" id="F58B3.2.1">
    <property type="protein sequence ID" value="F58B3.2.1"/>
    <property type="gene ID" value="WBGene00003094"/>
</dbReference>
<dbReference type="GeneID" id="186491"/>
<dbReference type="KEGG" id="cel:CELE_F58B3.2"/>
<dbReference type="UCSC" id="F58B3.2">
    <property type="organism name" value="c. elegans"/>
</dbReference>
<dbReference type="AGR" id="WB:WBGene00003094"/>
<dbReference type="CTD" id="186491"/>
<dbReference type="WormBase" id="F58B3.2">
    <property type="protein sequence ID" value="CE06004"/>
    <property type="gene ID" value="WBGene00003094"/>
    <property type="gene designation" value="lys-5"/>
</dbReference>
<dbReference type="eggNOG" id="ENOG502S5CG">
    <property type="taxonomic scope" value="Eukaryota"/>
</dbReference>
<dbReference type="GeneTree" id="ENSGT00970000195882"/>
<dbReference type="HOGENOM" id="CLU_073372_3_0_1"/>
<dbReference type="InParanoid" id="Q20967"/>
<dbReference type="OMA" id="IDENWIP"/>
<dbReference type="OrthoDB" id="2251794at2759"/>
<dbReference type="PhylomeDB" id="Q20967"/>
<dbReference type="PRO" id="PR:Q20967"/>
<dbReference type="Proteomes" id="UP000001940">
    <property type="component" value="Chromosome IV"/>
</dbReference>
<dbReference type="Bgee" id="WBGene00003094">
    <property type="expression patterns" value="Expressed in adult organism and 1 other cell type or tissue"/>
</dbReference>
<dbReference type="GO" id="GO:0003796">
    <property type="term" value="F:lysozyme activity"/>
    <property type="evidence" value="ECO:0007669"/>
    <property type="project" value="InterPro"/>
</dbReference>
<dbReference type="GO" id="GO:0016998">
    <property type="term" value="P:cell wall macromolecule catabolic process"/>
    <property type="evidence" value="ECO:0007669"/>
    <property type="project" value="InterPro"/>
</dbReference>
<dbReference type="GO" id="GO:0050830">
    <property type="term" value="P:defense response to Gram-positive bacterium"/>
    <property type="evidence" value="ECO:0000315"/>
    <property type="project" value="WormBase"/>
</dbReference>
<dbReference type="GO" id="GO:0045087">
    <property type="term" value="P:innate immune response"/>
    <property type="evidence" value="ECO:0000318"/>
    <property type="project" value="GO_Central"/>
</dbReference>
<dbReference type="GO" id="GO:0031640">
    <property type="term" value="P:killing of cells of another organism"/>
    <property type="evidence" value="ECO:0007669"/>
    <property type="project" value="UniProtKB-KW"/>
</dbReference>
<dbReference type="GO" id="GO:0009253">
    <property type="term" value="P:peptidoglycan catabolic process"/>
    <property type="evidence" value="ECO:0007669"/>
    <property type="project" value="InterPro"/>
</dbReference>
<dbReference type="GO" id="GO:0007165">
    <property type="term" value="P:signal transduction"/>
    <property type="evidence" value="ECO:0000318"/>
    <property type="project" value="GO_Central"/>
</dbReference>
<dbReference type="CDD" id="cd06416">
    <property type="entry name" value="GH25_Lys1-like"/>
    <property type="match status" value="1"/>
</dbReference>
<dbReference type="FunFam" id="3.20.20.80:FF:000134">
    <property type="entry name" value="Glycoside hydrolase"/>
    <property type="match status" value="1"/>
</dbReference>
<dbReference type="Gene3D" id="3.20.20.80">
    <property type="entry name" value="Glycosidases"/>
    <property type="match status" value="1"/>
</dbReference>
<dbReference type="InterPro" id="IPR051595">
    <property type="entry name" value="GH25_Enzymes"/>
</dbReference>
<dbReference type="InterPro" id="IPR002053">
    <property type="entry name" value="Glyco_hydro_25"/>
</dbReference>
<dbReference type="InterPro" id="IPR017853">
    <property type="entry name" value="Glycoside_hydrolase_SF"/>
</dbReference>
<dbReference type="PANTHER" id="PTHR23208">
    <property type="entry name" value="LYSOZYME PROTEIN"/>
    <property type="match status" value="1"/>
</dbReference>
<dbReference type="PANTHER" id="PTHR23208:SF36">
    <property type="entry name" value="LYSOZYME-RELATED"/>
    <property type="match status" value="1"/>
</dbReference>
<dbReference type="Pfam" id="PF01183">
    <property type="entry name" value="Glyco_hydro_25"/>
    <property type="match status" value="1"/>
</dbReference>
<dbReference type="SUPFAM" id="SSF51445">
    <property type="entry name" value="(Trans)glycosidases"/>
    <property type="match status" value="1"/>
</dbReference>
<dbReference type="PROSITE" id="PS51904">
    <property type="entry name" value="GLYCOSYL_HYDROL_F25_2"/>
    <property type="match status" value="1"/>
</dbReference>
<proteinExistence type="evidence at transcript level"/>
<reference evidence="6" key="1">
    <citation type="journal article" date="1998" name="Science">
        <title>Genome sequence of the nematode C. elegans: a platform for investigating biology.</title>
        <authorList>
            <consortium name="The C. elegans sequencing consortium"/>
        </authorList>
    </citation>
    <scope>NUCLEOTIDE SEQUENCE [LARGE SCALE GENOMIC DNA]</scope>
    <source>
        <strain evidence="6">Bristol N2</strain>
    </source>
</reference>
<reference evidence="5" key="2">
    <citation type="journal article" date="2011" name="PLoS ONE">
        <title>Protist-type lysozymes of the nematode Caenorhabditis elegans contribute to resistance against pathogenic Bacillus thuringiensis.</title>
        <authorList>
            <person name="Boehnisch C."/>
            <person name="Wong D."/>
            <person name="Habig M."/>
            <person name="Isermann K."/>
            <person name="Michiels N.K."/>
            <person name="Roeder T."/>
            <person name="May R.C."/>
            <person name="Schulenburg H."/>
        </authorList>
    </citation>
    <scope>FUNCTION</scope>
    <scope>INDUCTION</scope>
    <scope>DISRUPTION PHENOTYPE</scope>
</reference>
<reference evidence="5" key="3">
    <citation type="journal article" date="2014" name="Immunity">
        <title>Innate host defense requires TFEB-mediated transcription of cytoprotective and antimicrobial genes.</title>
        <authorList>
            <person name="Visvikis O."/>
            <person name="Ihuegbu N."/>
            <person name="Labed S.A."/>
            <person name="Luhachack L.G."/>
            <person name="Alves A.M."/>
            <person name="Wollenberg A.C."/>
            <person name="Stuart L.M."/>
            <person name="Stormo G.D."/>
            <person name="Irazoqui J.E."/>
        </authorList>
    </citation>
    <scope>FUNCTION</scope>
    <scope>INDUCTION</scope>
    <scope>DISRUPTION PHENOTYPE</scope>
</reference>
<gene>
    <name evidence="7" type="primary">lys-5</name>
    <name evidence="7" type="ORF">F58B3.2</name>
</gene>
<feature type="signal peptide" evidence="1">
    <location>
        <begin position="1"/>
        <end position="17"/>
    </location>
</feature>
<feature type="chain" id="PRO_5004199032" description="Lysozyme-like protein 5" evidence="1">
    <location>
        <begin position="18"/>
        <end position="215"/>
    </location>
</feature>
<feature type="domain" description="Ch-type lysozyme" evidence="2">
    <location>
        <begin position="18"/>
        <end position="215"/>
    </location>
</feature>
<feature type="active site" evidence="2">
    <location>
        <position position="23"/>
    </location>
</feature>
<feature type="active site" evidence="2">
    <location>
        <position position="113"/>
    </location>
</feature>
<feature type="active site" evidence="2">
    <location>
        <position position="115"/>
    </location>
</feature>
<organism evidence="6">
    <name type="scientific">Caenorhabditis elegans</name>
    <dbReference type="NCBI Taxonomy" id="6239"/>
    <lineage>
        <taxon>Eukaryota</taxon>
        <taxon>Metazoa</taxon>
        <taxon>Ecdysozoa</taxon>
        <taxon>Nematoda</taxon>
        <taxon>Chromadorea</taxon>
        <taxon>Rhabditida</taxon>
        <taxon>Rhabditina</taxon>
        <taxon>Rhabditomorpha</taxon>
        <taxon>Rhabditoidea</taxon>
        <taxon>Rhabditidae</taxon>
        <taxon>Peloderinae</taxon>
        <taxon>Caenorhabditis</taxon>
    </lineage>
</organism>
<evidence type="ECO:0000255" key="1"/>
<evidence type="ECO:0000255" key="2">
    <source>
        <dbReference type="PROSITE-ProRule" id="PRU01252"/>
    </source>
</evidence>
<evidence type="ECO:0000269" key="3">
    <source>
    </source>
</evidence>
<evidence type="ECO:0000269" key="4">
    <source>
    </source>
</evidence>
<evidence type="ECO:0000305" key="5"/>
<evidence type="ECO:0000312" key="6">
    <source>
        <dbReference type="Proteomes" id="UP000001940"/>
    </source>
</evidence>
<evidence type="ECO:0000312" key="7">
    <source>
        <dbReference type="WormBase" id="F58B3.2"/>
    </source>
</evidence>